<evidence type="ECO:0000255" key="1"/>
<evidence type="ECO:0000255" key="2">
    <source>
        <dbReference type="RuleBase" id="RU003796"/>
    </source>
</evidence>
<evidence type="ECO:0000256" key="3">
    <source>
        <dbReference type="SAM" id="MobiDB-lite"/>
    </source>
</evidence>
<evidence type="ECO:0000269" key="4">
    <source>
    </source>
</evidence>
<evidence type="ECO:0000303" key="5">
    <source>
    </source>
</evidence>
<evidence type="ECO:0000305" key="6"/>
<evidence type="ECO:0000312" key="7">
    <source>
        <dbReference type="Proteomes" id="UP000001940"/>
    </source>
</evidence>
<evidence type="ECO:0000312" key="8">
    <source>
        <dbReference type="WormBase" id="F49E12.6"/>
    </source>
</evidence>
<organism evidence="7">
    <name type="scientific">Caenorhabditis elegans</name>
    <dbReference type="NCBI Taxonomy" id="6239"/>
    <lineage>
        <taxon>Eukaryota</taxon>
        <taxon>Metazoa</taxon>
        <taxon>Ecdysozoa</taxon>
        <taxon>Nematoda</taxon>
        <taxon>Chromadorea</taxon>
        <taxon>Rhabditida</taxon>
        <taxon>Rhabditina</taxon>
        <taxon>Rhabditomorpha</taxon>
        <taxon>Rhabditoidea</taxon>
        <taxon>Rhabditidae</taxon>
        <taxon>Peloderinae</taxon>
        <taxon>Caenorhabditis</taxon>
    </lineage>
</organism>
<proteinExistence type="evidence at transcript level"/>
<name>EFL3_CAEEL</name>
<gene>
    <name evidence="8" type="primary">efl-3</name>
    <name evidence="8" type="ORF">F49E12.6</name>
</gene>
<sequence length="600" mass="66938">MTTIFGSSNAMFLNIEANKENIPPGTEFKKESFVLPEPRVNRTTDPDHENLLPSPVPRPSPAMSQLSDASFLSQDGGAVNTSADEADDDLEVTSRKEKSLGLLCQRFLIAINEETVGSSTREVHLETVARKMNVEKRRIYDIVNVMEALDAMQKTNKSYYQWQGLESLPKLMFDLQNEAVEEGLPERVLRVEQAMCSFTELSSPRGKQGFKDIVGSFVSCTSTPTTPSTSFDSVTVKMEPAGLLEKRSRVDTRDRQGRNSLAQLCRRFLMVLLSNPKNIRKVSLDVASTVLIKDPETEGFEPPSRSRCRRLYDIANVLVALGLIKKVHYLFGTKKIPLFVYCGPEPDQTGSFDVFQSVERLLSSSQNVPQTPIIKAQTDKIVQQIAGFGKRTLSEQNLTKPSGNTPKIAKIKSAAVRSSPMYMENNLFMFAEVVTAEAAAEKMRYDAFAQLSRTILGSVASINSLNAPLTSSQHPMTSRLPPLPMAPLQLPKLPEIPKPQAQKQFTFPATSRPRFNFPDYTPVQSTIRPLVSQMTFPQESSQLHNLDVKPKHLMSNILGESKKFKNNQNTFEHTTSSAFQVVKKGETRPKKVFGEIQNLQ</sequence>
<reference key="1">
    <citation type="journal article" date="1998" name="Science">
        <title>Genome sequence of the nematode C. elegans: a platform for investigating biology.</title>
        <authorList>
            <consortium name="The C. elegans sequencing consortium"/>
        </authorList>
    </citation>
    <scope>NUCLEOTIDE SEQUENCE [LARGE SCALE GENOMIC DNA]</scope>
    <source>
        <strain evidence="7">Bristol N2</strain>
    </source>
</reference>
<reference key="2">
    <citation type="journal article" date="2011" name="Genetics">
        <title>Hox and a newly identified E2F co-repress cell death in Caenorhabditis elegans.</title>
        <authorList>
            <person name="Winn J."/>
            <person name="Carter M."/>
            <person name="Avery L."/>
            <person name="Cameron S."/>
        </authorList>
    </citation>
    <scope>FUNCTION</scope>
    <scope>DEVELOPMENTAL STAGE</scope>
    <scope>DISRUPTION PHENOTYPE</scope>
</reference>
<keyword id="KW-0217">Developmental protein</keyword>
<keyword id="KW-0238">DNA-binding</keyword>
<keyword id="KW-0539">Nucleus</keyword>
<keyword id="KW-1185">Reference proteome</keyword>
<keyword id="KW-0804">Transcription</keyword>
<keyword id="KW-0805">Transcription regulation</keyword>
<accession>Q20619</accession>
<dbReference type="EMBL" id="BX284602">
    <property type="protein sequence ID" value="CAA91391.2"/>
    <property type="molecule type" value="Genomic_DNA"/>
</dbReference>
<dbReference type="PIR" id="T22451">
    <property type="entry name" value="T22451"/>
</dbReference>
<dbReference type="RefSeq" id="NP_495771.2">
    <property type="nucleotide sequence ID" value="NM_063370.8"/>
</dbReference>
<dbReference type="SMR" id="Q20619"/>
<dbReference type="FunCoup" id="Q20619">
    <property type="interactions" value="37"/>
</dbReference>
<dbReference type="STRING" id="6239.F49E12.6.1"/>
<dbReference type="PaxDb" id="6239-F49E12.6"/>
<dbReference type="PeptideAtlas" id="Q20619"/>
<dbReference type="EnsemblMetazoa" id="F49E12.6.1">
    <property type="protein sequence ID" value="F49E12.6.1"/>
    <property type="gene ID" value="WBGene00009899"/>
</dbReference>
<dbReference type="GeneID" id="174341"/>
<dbReference type="KEGG" id="cel:CELE_F49E12.6"/>
<dbReference type="UCSC" id="F49E12.6">
    <property type="organism name" value="c. elegans"/>
</dbReference>
<dbReference type="AGR" id="WB:WBGene00009899"/>
<dbReference type="CTD" id="174341"/>
<dbReference type="WormBase" id="F49E12.6">
    <property type="protein sequence ID" value="CE37018"/>
    <property type="gene ID" value="WBGene00009899"/>
    <property type="gene designation" value="efl-3"/>
</dbReference>
<dbReference type="eggNOG" id="KOG2578">
    <property type="taxonomic scope" value="Eukaryota"/>
</dbReference>
<dbReference type="GeneTree" id="ENSGT00940000170769"/>
<dbReference type="HOGENOM" id="CLU_462503_0_0_1"/>
<dbReference type="InParanoid" id="Q20619"/>
<dbReference type="OMA" id="KSYYQWQ"/>
<dbReference type="OrthoDB" id="5318at2759"/>
<dbReference type="PhylomeDB" id="Q20619"/>
<dbReference type="PRO" id="PR:Q20619"/>
<dbReference type="Proteomes" id="UP000001940">
    <property type="component" value="Chromosome II"/>
</dbReference>
<dbReference type="Bgee" id="WBGene00009899">
    <property type="expression patterns" value="Expressed in pharyngeal muscle cell (C elegans) and 3 other cell types or tissues"/>
</dbReference>
<dbReference type="GO" id="GO:0090575">
    <property type="term" value="C:RNA polymerase II transcription regulator complex"/>
    <property type="evidence" value="ECO:0000318"/>
    <property type="project" value="GO_Central"/>
</dbReference>
<dbReference type="GO" id="GO:0000981">
    <property type="term" value="F:DNA-binding transcription factor activity, RNA polymerase II-specific"/>
    <property type="evidence" value="ECO:0000318"/>
    <property type="project" value="GO_Central"/>
</dbReference>
<dbReference type="GO" id="GO:0000978">
    <property type="term" value="F:RNA polymerase II cis-regulatory region sequence-specific DNA binding"/>
    <property type="evidence" value="ECO:0000318"/>
    <property type="project" value="GO_Central"/>
</dbReference>
<dbReference type="GO" id="GO:0010629">
    <property type="term" value="P:negative regulation of gene expression"/>
    <property type="evidence" value="ECO:0000315"/>
    <property type="project" value="UniProtKB"/>
</dbReference>
<dbReference type="GO" id="GO:0006357">
    <property type="term" value="P:regulation of transcription by RNA polymerase II"/>
    <property type="evidence" value="ECO:0000318"/>
    <property type="project" value="GO_Central"/>
</dbReference>
<dbReference type="FunFam" id="1.10.10.10:FF:000832">
    <property type="entry name" value="E2F-like (Mammalian transcription factor)"/>
    <property type="match status" value="1"/>
</dbReference>
<dbReference type="FunFam" id="1.10.10.10:FF:000629">
    <property type="entry name" value="Transcription factor E2F/dimerization partner"/>
    <property type="match status" value="1"/>
</dbReference>
<dbReference type="Gene3D" id="1.10.10.10">
    <property type="entry name" value="Winged helix-like DNA-binding domain superfamily/Winged helix DNA-binding domain"/>
    <property type="match status" value="2"/>
</dbReference>
<dbReference type="InterPro" id="IPR015633">
    <property type="entry name" value="E2F"/>
</dbReference>
<dbReference type="InterPro" id="IPR003316">
    <property type="entry name" value="E2F_WHTH_DNA-bd_dom"/>
</dbReference>
<dbReference type="InterPro" id="IPR036388">
    <property type="entry name" value="WH-like_DNA-bd_sf"/>
</dbReference>
<dbReference type="InterPro" id="IPR036390">
    <property type="entry name" value="WH_DNA-bd_sf"/>
</dbReference>
<dbReference type="PANTHER" id="PTHR12081">
    <property type="entry name" value="TRANSCRIPTION FACTOR E2F"/>
    <property type="match status" value="1"/>
</dbReference>
<dbReference type="PANTHER" id="PTHR12081:SF7">
    <property type="entry name" value="TRANSCRIPTION FACTOR EFL-3"/>
    <property type="match status" value="1"/>
</dbReference>
<dbReference type="Pfam" id="PF02319">
    <property type="entry name" value="E2F_TDP"/>
    <property type="match status" value="2"/>
</dbReference>
<dbReference type="SMART" id="SM01372">
    <property type="entry name" value="E2F_TDP"/>
    <property type="match status" value="2"/>
</dbReference>
<dbReference type="SUPFAM" id="SSF46785">
    <property type="entry name" value="Winged helix' DNA-binding domain"/>
    <property type="match status" value="2"/>
</dbReference>
<feature type="chain" id="PRO_0000451763" description="Transcription factor efl-3">
    <location>
        <begin position="1"/>
        <end position="600"/>
    </location>
</feature>
<feature type="DNA-binding region" evidence="1">
    <location>
        <begin position="95"/>
        <end position="164"/>
    </location>
</feature>
<feature type="DNA-binding region" evidence="1">
    <location>
        <begin position="253"/>
        <end position="343"/>
    </location>
</feature>
<feature type="region of interest" description="Disordered" evidence="3">
    <location>
        <begin position="35"/>
        <end position="65"/>
    </location>
</feature>
<feature type="compositionally biased region" description="Basic and acidic residues" evidence="3">
    <location>
        <begin position="39"/>
        <end position="50"/>
    </location>
</feature>
<protein>
    <recommendedName>
        <fullName evidence="6">Transcription factor efl-3</fullName>
    </recommendedName>
    <alternativeName>
        <fullName evidence="5">E2F-like family member 3</fullName>
    </alternativeName>
</protein>
<comment type="function">
    <text evidence="4">Probable transcription factor which represses gene expression in a subset of ventral nerve cord neurons (PubMed:21596899). Involved in regulating programmed cell death and determining cell fate during development, acting in a partially redundant manner with lin-39 to repress the BH3 domain-encoding gene egl-1 in the VA and VB motor neurons (PubMed:21596899).</text>
</comment>
<comment type="subcellular location">
    <subcellularLocation>
        <location evidence="2">Nucleus</location>
    </subcellularLocation>
</comment>
<comment type="developmental stage">
    <text evidence="4">Expressed in embryos, larvae and adults (PubMed:21596899). Expression begins in multiple cells in embryos, reaching a maximum in the L1-L2 larval stages (PubMed:21596899). Expressed in the ventral nerve cord VA and VB neurons, but not in the VC neurons (PubMed:21596899).</text>
</comment>
<comment type="disruption phenotype">
    <text evidence="4">RNAi-mediated knockdown on a ced-3 mutant background results in ectopic egl-1 expression in posterior ventral nerve cord neurons (PubMed:21596899). RNAi-mediated knockdown on a simultaneous lin-39; ced-3 mutant background results in ectopic egl-1 expression in midbody and posterior ventral nerve cord neurons (PubMed:21596899).</text>
</comment>
<comment type="similarity">
    <text evidence="6">Belongs to the E2F/DP family.</text>
</comment>